<gene>
    <name type="primary">acyP</name>
    <name type="ordered locus">XCV0970</name>
</gene>
<organism>
    <name type="scientific">Xanthomonas euvesicatoria pv. vesicatoria (strain 85-10)</name>
    <name type="common">Xanthomonas campestris pv. vesicatoria</name>
    <dbReference type="NCBI Taxonomy" id="316273"/>
    <lineage>
        <taxon>Bacteria</taxon>
        <taxon>Pseudomonadati</taxon>
        <taxon>Pseudomonadota</taxon>
        <taxon>Gammaproteobacteria</taxon>
        <taxon>Lysobacterales</taxon>
        <taxon>Lysobacteraceae</taxon>
        <taxon>Xanthomonas</taxon>
    </lineage>
</organism>
<sequence length="88" mass="9005">MQAARFVVSGVVQGVWYRASTRQRAVALGLVGHARNQADGSVEVVAAGSAAALDALEAWLWQGPPAATVAAVTRTACAVPPTEDFVTG</sequence>
<dbReference type="EC" id="3.6.1.7"/>
<dbReference type="EMBL" id="AM039952">
    <property type="protein sequence ID" value="CAJ22601.1"/>
    <property type="molecule type" value="Genomic_DNA"/>
</dbReference>
<dbReference type="RefSeq" id="WP_008578150.1">
    <property type="nucleotide sequence ID" value="NZ_CP017190.1"/>
</dbReference>
<dbReference type="SMR" id="Q3BX12"/>
<dbReference type="STRING" id="456327.BJD11_17915"/>
<dbReference type="KEGG" id="xcv:XCV0970"/>
<dbReference type="eggNOG" id="COG1254">
    <property type="taxonomic scope" value="Bacteria"/>
</dbReference>
<dbReference type="HOGENOM" id="CLU_141932_1_3_6"/>
<dbReference type="Proteomes" id="UP000007069">
    <property type="component" value="Chromosome"/>
</dbReference>
<dbReference type="GO" id="GO:0003998">
    <property type="term" value="F:acylphosphatase activity"/>
    <property type="evidence" value="ECO:0007669"/>
    <property type="project" value="UniProtKB-EC"/>
</dbReference>
<dbReference type="Gene3D" id="3.30.70.100">
    <property type="match status" value="1"/>
</dbReference>
<dbReference type="InterPro" id="IPR020456">
    <property type="entry name" value="Acylphosphatase"/>
</dbReference>
<dbReference type="InterPro" id="IPR001792">
    <property type="entry name" value="Acylphosphatase-like_dom"/>
</dbReference>
<dbReference type="InterPro" id="IPR036046">
    <property type="entry name" value="Acylphosphatase-like_dom_sf"/>
</dbReference>
<dbReference type="NCBIfam" id="NF011018">
    <property type="entry name" value="PRK14446.1"/>
    <property type="match status" value="1"/>
</dbReference>
<dbReference type="PANTHER" id="PTHR47268">
    <property type="entry name" value="ACYLPHOSPHATASE"/>
    <property type="match status" value="1"/>
</dbReference>
<dbReference type="PANTHER" id="PTHR47268:SF4">
    <property type="entry name" value="ACYLPHOSPHATASE"/>
    <property type="match status" value="1"/>
</dbReference>
<dbReference type="Pfam" id="PF00708">
    <property type="entry name" value="Acylphosphatase"/>
    <property type="match status" value="1"/>
</dbReference>
<dbReference type="SUPFAM" id="SSF54975">
    <property type="entry name" value="Acylphosphatase/BLUF domain-like"/>
    <property type="match status" value="1"/>
</dbReference>
<dbReference type="PROSITE" id="PS51160">
    <property type="entry name" value="ACYLPHOSPHATASE_3"/>
    <property type="match status" value="1"/>
</dbReference>
<keyword id="KW-0378">Hydrolase</keyword>
<reference key="1">
    <citation type="journal article" date="2005" name="J. Bacteriol.">
        <title>Insights into genome plasticity and pathogenicity of the plant pathogenic Bacterium Xanthomonas campestris pv. vesicatoria revealed by the complete genome sequence.</title>
        <authorList>
            <person name="Thieme F."/>
            <person name="Koebnik R."/>
            <person name="Bekel T."/>
            <person name="Berger C."/>
            <person name="Boch J."/>
            <person name="Buettner D."/>
            <person name="Caldana C."/>
            <person name="Gaigalat L."/>
            <person name="Goesmann A."/>
            <person name="Kay S."/>
            <person name="Kirchner O."/>
            <person name="Lanz C."/>
            <person name="Linke B."/>
            <person name="McHardy A.C."/>
            <person name="Meyer F."/>
            <person name="Mittenhuber G."/>
            <person name="Nies D.H."/>
            <person name="Niesbach-Kloesgen U."/>
            <person name="Patschkowski T."/>
            <person name="Rueckert C."/>
            <person name="Rupp O."/>
            <person name="Schneiker S."/>
            <person name="Schuster S.C."/>
            <person name="Vorhoelter F.J."/>
            <person name="Weber E."/>
            <person name="Puehler A."/>
            <person name="Bonas U."/>
            <person name="Bartels D."/>
            <person name="Kaiser O."/>
        </authorList>
    </citation>
    <scope>NUCLEOTIDE SEQUENCE [LARGE SCALE GENOMIC DNA]</scope>
    <source>
        <strain>85-10</strain>
    </source>
</reference>
<comment type="catalytic activity">
    <reaction>
        <text>an acyl phosphate + H2O = a carboxylate + phosphate + H(+)</text>
        <dbReference type="Rhea" id="RHEA:14965"/>
        <dbReference type="ChEBI" id="CHEBI:15377"/>
        <dbReference type="ChEBI" id="CHEBI:15378"/>
        <dbReference type="ChEBI" id="CHEBI:29067"/>
        <dbReference type="ChEBI" id="CHEBI:43474"/>
        <dbReference type="ChEBI" id="CHEBI:59918"/>
        <dbReference type="EC" id="3.6.1.7"/>
    </reaction>
</comment>
<comment type="similarity">
    <text evidence="2">Belongs to the acylphosphatase family.</text>
</comment>
<protein>
    <recommendedName>
        <fullName>Acylphosphatase</fullName>
        <ecNumber>3.6.1.7</ecNumber>
    </recommendedName>
    <alternativeName>
        <fullName>Acylphosphate phosphohydrolase</fullName>
    </alternativeName>
</protein>
<proteinExistence type="inferred from homology"/>
<evidence type="ECO:0000255" key="1">
    <source>
        <dbReference type="PROSITE-ProRule" id="PRU00520"/>
    </source>
</evidence>
<evidence type="ECO:0000305" key="2"/>
<name>ACYP_XANE5</name>
<accession>Q3BX12</accession>
<feature type="chain" id="PRO_0000326848" description="Acylphosphatase">
    <location>
        <begin position="1"/>
        <end position="88"/>
    </location>
</feature>
<feature type="domain" description="Acylphosphatase-like" evidence="1">
    <location>
        <begin position="3"/>
        <end position="88"/>
    </location>
</feature>
<feature type="active site" evidence="1">
    <location>
        <position position="18"/>
    </location>
</feature>
<feature type="active site" evidence="1">
    <location>
        <position position="36"/>
    </location>
</feature>